<comment type="function">
    <text evidence="1 2">May act as a calcium-independent, swelling-dependent volume-regulated anion channel (VRAC-swell) which plays a pivotal role in the process of regulatory volume decrease (RVD) in the brain through the efflux of anions like chloride and organic osmolytes like glutamate. Probable large-conductance Ca(2+)-activated chloride channel.</text>
</comment>
<comment type="catalytic activity">
    <reaction evidence="1">
        <text>chloride(in) = chloride(out)</text>
        <dbReference type="Rhea" id="RHEA:29823"/>
        <dbReference type="ChEBI" id="CHEBI:17996"/>
    </reaction>
</comment>
<comment type="catalytic activity">
    <reaction evidence="1">
        <text>L-glutamate(out) = L-glutamate(in)</text>
        <dbReference type="Rhea" id="RHEA:66336"/>
        <dbReference type="ChEBI" id="CHEBI:29985"/>
    </reaction>
    <physiologicalReaction direction="right-to-left" evidence="1">
        <dbReference type="Rhea" id="RHEA:66338"/>
    </physiologicalReaction>
</comment>
<comment type="subunit">
    <text evidence="1">Forms cis-homodimers in the presence of Ca(+2) and forms monomers and trans-dimers in the absence of Ca(2+).</text>
</comment>
<comment type="subcellular location">
    <subcellularLocation>
        <location evidence="2">Cell membrane</location>
        <topology evidence="3">Multi-pass membrane protein</topology>
    </subcellularLocation>
</comment>
<comment type="similarity">
    <text evidence="4">Belongs to the tweety family.</text>
</comment>
<name>TTYH2_XENTR</name>
<proteinExistence type="evidence at transcript level"/>
<feature type="chain" id="PRO_0000312250" description="Protein tweety homolog 2">
    <location>
        <begin position="1"/>
        <end position="534"/>
    </location>
</feature>
<feature type="topological domain" description="Extracellular" evidence="3">
    <location>
        <begin position="1"/>
        <end position="44"/>
    </location>
</feature>
<feature type="transmembrane region" description="Helical; Name=1" evidence="3">
    <location>
        <begin position="45"/>
        <end position="65"/>
    </location>
</feature>
<feature type="topological domain" description="Cytoplasmic" evidence="3">
    <location>
        <begin position="66"/>
        <end position="87"/>
    </location>
</feature>
<feature type="transmembrane region" description="Helical; Name=2" evidence="3">
    <location>
        <begin position="88"/>
        <end position="108"/>
    </location>
</feature>
<feature type="topological domain" description="Extracellular" evidence="3">
    <location>
        <begin position="109"/>
        <end position="213"/>
    </location>
</feature>
<feature type="transmembrane region" description="Helical; Name=3" evidence="3">
    <location>
        <begin position="214"/>
        <end position="234"/>
    </location>
</feature>
<feature type="topological domain" description="Cytoplasmic" evidence="3">
    <location>
        <begin position="235"/>
        <end position="240"/>
    </location>
</feature>
<feature type="transmembrane region" description="Helical; Name=4" evidence="3">
    <location>
        <begin position="241"/>
        <end position="261"/>
    </location>
</feature>
<feature type="topological domain" description="Extracellular" evidence="3">
    <location>
        <begin position="262"/>
        <end position="388"/>
    </location>
</feature>
<feature type="transmembrane region" description="Helical; Name=5" evidence="3">
    <location>
        <begin position="389"/>
        <end position="409"/>
    </location>
</feature>
<feature type="topological domain" description="Cytoplasmic" evidence="3">
    <location>
        <begin position="410"/>
        <end position="534"/>
    </location>
</feature>
<feature type="short sequence motif" description="RGD" evidence="1">
    <location>
        <begin position="164"/>
        <end position="166"/>
    </location>
</feature>
<feature type="binding site" evidence="1">
    <location>
        <position position="113"/>
    </location>
    <ligand>
        <name>Ca(2+)</name>
        <dbReference type="ChEBI" id="CHEBI:29108"/>
    </ligand>
</feature>
<feature type="binding site" evidence="1">
    <location>
        <position position="116"/>
    </location>
    <ligand>
        <name>Ca(2+)</name>
        <dbReference type="ChEBI" id="CHEBI:29108"/>
    </ligand>
</feature>
<feature type="site" description="Essential for the formation of the channel-pore" evidence="1">
    <location>
        <position position="164"/>
    </location>
</feature>
<feature type="glycosylation site" description="N-linked (GlcNAc...) asparagine" evidence="3">
    <location>
        <position position="129"/>
    </location>
</feature>
<feature type="glycosylation site" description="N-linked (GlcNAc...) asparagine" evidence="3">
    <location>
        <position position="197"/>
    </location>
</feature>
<feature type="glycosylation site" description="N-linked (GlcNAc...) asparagine" evidence="3">
    <location>
        <position position="283"/>
    </location>
</feature>
<feature type="glycosylation site" description="N-linked (GlcNAc...) asparagine" evidence="3">
    <location>
        <position position="352"/>
    </location>
</feature>
<feature type="disulfide bond" evidence="2">
    <location>
        <begin position="274"/>
        <end position="382"/>
    </location>
</feature>
<feature type="disulfide bond" evidence="2">
    <location>
        <begin position="300"/>
        <end position="367"/>
    </location>
</feature>
<sequence>MAAARVEYIAPWWVYWLHNFPHVDLSLRQKSPDFNPKDPGYQQTLLFVALIVALCAAVNLLFVSVYLICLCCCKKEDETETKKTSSCCVTWTAAVSGLLCCAAVGIGFYGNSETNDGVYQLTYSLDNANHTLAGIDSLVSNTNFKMKEDLDKHLFRLNEIFAARGDYVQSLRFMQQMAGNIIQQLTSLPNWQGTSVNLSDIARQTSTIEYYRWLSYLLLFISYVVICLVTCVGLAKKSKCLLLIMLCFGLIALMLSWTSLALETSSAMGTSDFCVAPDKFIMNMTHDQITTEVVHYYLYCSQSLRNPFQQALTVFQRSLTTMQIQVQGLLQFAVPLFPTAQKDLLGIQLLLNTSESNLHQITALLDCRGLHKDYLEALIGICYDGVEGMLYLGLFSLLAALAFTAMVCAMPQAWKHLEARDRDYNDIDDEDPFNPQARRIAAHNPNRGQLRSFCSYSSSMGSQASLQPPAPTVSNAPVAEYMNQAALFGGNPRYENVPLIGRGSPPPTYSPTMRATYLSMTEEPSSIYSNVFPA</sequence>
<reference key="1">
    <citation type="submission" date="2004-01" db="EMBL/GenBank/DDBJ databases">
        <authorList>
            <consortium name="NIH - Xenopus Gene Collection (XGC) project"/>
        </authorList>
    </citation>
    <scope>NUCLEOTIDE SEQUENCE [LARGE SCALE MRNA]</scope>
    <source>
        <tissue>Embryo</tissue>
    </source>
</reference>
<evidence type="ECO:0000250" key="1">
    <source>
        <dbReference type="UniProtKB" id="Q3TH73"/>
    </source>
</evidence>
<evidence type="ECO:0000250" key="2">
    <source>
        <dbReference type="UniProtKB" id="Q9BSA4"/>
    </source>
</evidence>
<evidence type="ECO:0000255" key="3"/>
<evidence type="ECO:0000305" key="4"/>
<dbReference type="EMBL" id="BC064869">
    <property type="protein sequence ID" value="AAH64869.1"/>
    <property type="molecule type" value="mRNA"/>
</dbReference>
<dbReference type="RefSeq" id="NP_989411.1">
    <property type="nucleotide sequence ID" value="NM_204080.1"/>
</dbReference>
<dbReference type="SMR" id="Q6P1U2"/>
<dbReference type="FunCoup" id="Q6P1U2">
    <property type="interactions" value="904"/>
</dbReference>
<dbReference type="STRING" id="8364.ENSXETP00000020935"/>
<dbReference type="GlyCosmos" id="Q6P1U2">
    <property type="glycosylation" value="4 sites, No reported glycans"/>
</dbReference>
<dbReference type="PaxDb" id="8364-ENSXETP00000060296"/>
<dbReference type="DNASU" id="395050"/>
<dbReference type="GeneID" id="395050"/>
<dbReference type="KEGG" id="xtr:395050"/>
<dbReference type="AGR" id="Xenbase:XB-GENE-854678"/>
<dbReference type="CTD" id="94015"/>
<dbReference type="Xenbase" id="XB-GENE-854678">
    <property type="gene designation" value="ttyh2"/>
</dbReference>
<dbReference type="eggNOG" id="KOG4433">
    <property type="taxonomic scope" value="Eukaryota"/>
</dbReference>
<dbReference type="InParanoid" id="Q6P1U2"/>
<dbReference type="OMA" id="MRATYMS"/>
<dbReference type="OrthoDB" id="187568at2759"/>
<dbReference type="Reactome" id="R-XTR-2672351">
    <property type="pathway name" value="Stimuli-sensing channels"/>
</dbReference>
<dbReference type="Proteomes" id="UP000008143">
    <property type="component" value="Chromosome 10"/>
</dbReference>
<dbReference type="Bgee" id="ENSXETG00000012828">
    <property type="expression patterns" value="Expressed in liver and 10 other cell types or tissues"/>
</dbReference>
<dbReference type="GO" id="GO:0034707">
    <property type="term" value="C:chloride channel complex"/>
    <property type="evidence" value="ECO:0007669"/>
    <property type="project" value="UniProtKB-KW"/>
</dbReference>
<dbReference type="GO" id="GO:0005886">
    <property type="term" value="C:plasma membrane"/>
    <property type="evidence" value="ECO:0000250"/>
    <property type="project" value="UniProtKB"/>
</dbReference>
<dbReference type="GO" id="GO:0005509">
    <property type="term" value="F:calcium ion binding"/>
    <property type="evidence" value="ECO:0000250"/>
    <property type="project" value="UniProtKB"/>
</dbReference>
<dbReference type="GO" id="GO:0072320">
    <property type="term" value="F:volume-sensitive chloride channel activity"/>
    <property type="evidence" value="ECO:0000250"/>
    <property type="project" value="UniProtKB"/>
</dbReference>
<dbReference type="GO" id="GO:0015813">
    <property type="term" value="P:L-glutamate transmembrane transport"/>
    <property type="evidence" value="ECO:0000250"/>
    <property type="project" value="UniProtKB"/>
</dbReference>
<dbReference type="CDD" id="cd07912">
    <property type="entry name" value="Tweety_N"/>
    <property type="match status" value="1"/>
</dbReference>
<dbReference type="InterPro" id="IPR006990">
    <property type="entry name" value="Tweety"/>
</dbReference>
<dbReference type="PANTHER" id="PTHR12424:SF6">
    <property type="entry name" value="PROTEIN TWEETY HOMOLOG 2"/>
    <property type="match status" value="1"/>
</dbReference>
<dbReference type="PANTHER" id="PTHR12424">
    <property type="entry name" value="TWEETY-RELATED"/>
    <property type="match status" value="1"/>
</dbReference>
<dbReference type="Pfam" id="PF04906">
    <property type="entry name" value="Tweety"/>
    <property type="match status" value="1"/>
</dbReference>
<organism>
    <name type="scientific">Xenopus tropicalis</name>
    <name type="common">Western clawed frog</name>
    <name type="synonym">Silurana tropicalis</name>
    <dbReference type="NCBI Taxonomy" id="8364"/>
    <lineage>
        <taxon>Eukaryota</taxon>
        <taxon>Metazoa</taxon>
        <taxon>Chordata</taxon>
        <taxon>Craniata</taxon>
        <taxon>Vertebrata</taxon>
        <taxon>Euteleostomi</taxon>
        <taxon>Amphibia</taxon>
        <taxon>Batrachia</taxon>
        <taxon>Anura</taxon>
        <taxon>Pipoidea</taxon>
        <taxon>Pipidae</taxon>
        <taxon>Xenopodinae</taxon>
        <taxon>Xenopus</taxon>
        <taxon>Silurana</taxon>
    </lineage>
</organism>
<keyword id="KW-0106">Calcium</keyword>
<keyword id="KW-1003">Cell membrane</keyword>
<keyword id="KW-0868">Chloride</keyword>
<keyword id="KW-0869">Chloride channel</keyword>
<keyword id="KW-1015">Disulfide bond</keyword>
<keyword id="KW-0325">Glycoprotein</keyword>
<keyword id="KW-0407">Ion channel</keyword>
<keyword id="KW-0406">Ion transport</keyword>
<keyword id="KW-0472">Membrane</keyword>
<keyword id="KW-0479">Metal-binding</keyword>
<keyword id="KW-1185">Reference proteome</keyword>
<keyword id="KW-0812">Transmembrane</keyword>
<keyword id="KW-1133">Transmembrane helix</keyword>
<keyword id="KW-0813">Transport</keyword>
<gene>
    <name type="primary">ttyh2</name>
</gene>
<protein>
    <recommendedName>
        <fullName>Protein tweety homolog 2</fullName>
    </recommendedName>
    <alternativeName>
        <fullName evidence="1">Volume-regulated anion channel subunit ttyh2</fullName>
    </alternativeName>
</protein>
<accession>Q6P1U2</accession>